<protein>
    <recommendedName>
        <fullName>Carbonic anhydrase</fullName>
        <ecNumber>4.2.1.1</ecNumber>
    </recommendedName>
    <alternativeName>
        <fullName>Carbonate dehydratase</fullName>
    </alternativeName>
</protein>
<sequence>MPNSNPVAAWKALKDGNARFVAGQPLHPSQGIERRASLTQAQRPTAVVFGCGDSRVAAEILFDQGLGDMFVVRTAGHVIDNAVLGSIEYAVTVLKVPLIVVLGHDSCGAVKATLSALDEGEVPSGFVRDIVERVTPSILLGRKAGLSRVDEFEAQHVNETVAQLQMRSTAIAQGLAAGTQAIVGTTYHLADGRVELRSHLGDIGEV</sequence>
<name>CYNT_MYCS2</name>
<evidence type="ECO:0000250" key="1"/>
<evidence type="ECO:0000269" key="2">
    <source>
    </source>
</evidence>
<evidence type="ECO:0000305" key="3"/>
<dbReference type="EC" id="4.2.1.1"/>
<dbReference type="EMBL" id="CP000480">
    <property type="protein sequence ID" value="ABK70331.1"/>
    <property type="molecule type" value="Genomic_DNA"/>
</dbReference>
<dbReference type="EMBL" id="CP001663">
    <property type="protein sequence ID" value="AFP42355.1"/>
    <property type="molecule type" value="Genomic_DNA"/>
</dbReference>
<dbReference type="RefSeq" id="WP_011731025.1">
    <property type="nucleotide sequence ID" value="NZ_SIJM01000046.1"/>
</dbReference>
<dbReference type="RefSeq" id="YP_890304.1">
    <property type="nucleotide sequence ID" value="NC_008596.1"/>
</dbReference>
<dbReference type="SMR" id="A0R566"/>
<dbReference type="STRING" id="246196.MSMEG_6082"/>
<dbReference type="PaxDb" id="246196-MSMEI_5922"/>
<dbReference type="KEGG" id="msb:LJ00_30075"/>
<dbReference type="KEGG" id="msg:MSMEI_5922"/>
<dbReference type="KEGG" id="msm:MSMEG_6082"/>
<dbReference type="PATRIC" id="fig|246196.19.peg.5920"/>
<dbReference type="eggNOG" id="COG0288">
    <property type="taxonomic scope" value="Bacteria"/>
</dbReference>
<dbReference type="OrthoDB" id="9797527at2"/>
<dbReference type="Proteomes" id="UP000000757">
    <property type="component" value="Chromosome"/>
</dbReference>
<dbReference type="Proteomes" id="UP000006158">
    <property type="component" value="Chromosome"/>
</dbReference>
<dbReference type="GO" id="GO:0004089">
    <property type="term" value="F:carbonate dehydratase activity"/>
    <property type="evidence" value="ECO:0000250"/>
    <property type="project" value="UniProtKB"/>
</dbReference>
<dbReference type="GO" id="GO:0008270">
    <property type="term" value="F:zinc ion binding"/>
    <property type="evidence" value="ECO:0000250"/>
    <property type="project" value="UniProtKB"/>
</dbReference>
<dbReference type="GO" id="GO:0015976">
    <property type="term" value="P:carbon utilization"/>
    <property type="evidence" value="ECO:0007669"/>
    <property type="project" value="InterPro"/>
</dbReference>
<dbReference type="CDD" id="cd03378">
    <property type="entry name" value="beta_CA_cladeC"/>
    <property type="match status" value="1"/>
</dbReference>
<dbReference type="FunFam" id="3.40.1050.10:FF:000006">
    <property type="entry name" value="Carbonic anhydrase"/>
    <property type="match status" value="1"/>
</dbReference>
<dbReference type="Gene3D" id="3.40.1050.10">
    <property type="entry name" value="Carbonic anhydrase"/>
    <property type="match status" value="1"/>
</dbReference>
<dbReference type="InterPro" id="IPR001765">
    <property type="entry name" value="Carbonic_anhydrase"/>
</dbReference>
<dbReference type="InterPro" id="IPR015892">
    <property type="entry name" value="Carbonic_anhydrase_CS"/>
</dbReference>
<dbReference type="InterPro" id="IPR036874">
    <property type="entry name" value="Carbonic_anhydrase_sf"/>
</dbReference>
<dbReference type="PANTHER" id="PTHR11002">
    <property type="entry name" value="CARBONIC ANHYDRASE"/>
    <property type="match status" value="1"/>
</dbReference>
<dbReference type="PANTHER" id="PTHR11002:SF79">
    <property type="entry name" value="CARBONIC ANHYDRASE 2"/>
    <property type="match status" value="1"/>
</dbReference>
<dbReference type="Pfam" id="PF00484">
    <property type="entry name" value="Pro_CA"/>
    <property type="match status" value="1"/>
</dbReference>
<dbReference type="SMART" id="SM00947">
    <property type="entry name" value="Pro_CA"/>
    <property type="match status" value="1"/>
</dbReference>
<dbReference type="SUPFAM" id="SSF53056">
    <property type="entry name" value="beta-carbonic anhydrase, cab"/>
    <property type="match status" value="1"/>
</dbReference>
<dbReference type="PROSITE" id="PS00705">
    <property type="entry name" value="PROK_CO2_ANHYDRASE_2"/>
    <property type="match status" value="1"/>
</dbReference>
<organism>
    <name type="scientific">Mycolicibacterium smegmatis (strain ATCC 700084 / mc(2)155)</name>
    <name type="common">Mycobacterium smegmatis</name>
    <dbReference type="NCBI Taxonomy" id="246196"/>
    <lineage>
        <taxon>Bacteria</taxon>
        <taxon>Bacillati</taxon>
        <taxon>Actinomycetota</taxon>
        <taxon>Actinomycetes</taxon>
        <taxon>Mycobacteriales</taxon>
        <taxon>Mycobacteriaceae</taxon>
        <taxon>Mycolicibacterium</taxon>
    </lineage>
</organism>
<accession>A0R566</accession>
<accession>I7FM58</accession>
<keyword id="KW-1017">Isopeptide bond</keyword>
<keyword id="KW-0456">Lyase</keyword>
<keyword id="KW-0479">Metal-binding</keyword>
<keyword id="KW-1185">Reference proteome</keyword>
<keyword id="KW-0832">Ubl conjugation</keyword>
<keyword id="KW-0862">Zinc</keyword>
<comment type="function">
    <text evidence="1">Catalyzes the reversible hydration of carbon dioxide to form bicarbonate.</text>
</comment>
<comment type="catalytic activity">
    <reaction>
        <text>hydrogencarbonate + H(+) = CO2 + H2O</text>
        <dbReference type="Rhea" id="RHEA:10748"/>
        <dbReference type="ChEBI" id="CHEBI:15377"/>
        <dbReference type="ChEBI" id="CHEBI:15378"/>
        <dbReference type="ChEBI" id="CHEBI:16526"/>
        <dbReference type="ChEBI" id="CHEBI:17544"/>
        <dbReference type="EC" id="4.2.1.1"/>
    </reaction>
</comment>
<comment type="cofactor">
    <cofactor evidence="1">
        <name>Zn(2+)</name>
        <dbReference type="ChEBI" id="CHEBI:29105"/>
    </cofactor>
    <text evidence="1">Binds 1 zinc ion per subunit.</text>
</comment>
<comment type="subunit">
    <text evidence="1">Homotetramer.</text>
</comment>
<comment type="similarity">
    <text evidence="3">Belongs to the beta-class carbonic anhydrase family.</text>
</comment>
<feature type="chain" id="PRO_0000396116" description="Carbonic anhydrase">
    <location>
        <begin position="1"/>
        <end position="206"/>
    </location>
</feature>
<feature type="binding site" evidence="1">
    <location>
        <position position="51"/>
    </location>
    <ligand>
        <name>Zn(2+)</name>
        <dbReference type="ChEBI" id="CHEBI:29105"/>
    </ligand>
</feature>
<feature type="binding site" evidence="1">
    <location>
        <position position="53"/>
    </location>
    <ligand>
        <name>Zn(2+)</name>
        <dbReference type="ChEBI" id="CHEBI:29105"/>
    </ligand>
</feature>
<feature type="binding site" evidence="1">
    <location>
        <position position="104"/>
    </location>
    <ligand>
        <name>Zn(2+)</name>
        <dbReference type="ChEBI" id="CHEBI:29105"/>
    </ligand>
</feature>
<feature type="binding site" evidence="1">
    <location>
        <position position="107"/>
    </location>
    <ligand>
        <name>Zn(2+)</name>
        <dbReference type="ChEBI" id="CHEBI:29105"/>
    </ligand>
</feature>
<feature type="cross-link" description="Isoglutamyl lysine isopeptide (Lys-Gln) (interchain with Q-Cter in protein Pup)" evidence="2">
    <location>
        <position position="11"/>
    </location>
</feature>
<proteinExistence type="evidence at protein level"/>
<gene>
    <name type="primary">cynT</name>
    <name type="ordered locus">MSMEG_6082</name>
    <name type="ordered locus">MSMEI_5922</name>
</gene>
<reference key="1">
    <citation type="submission" date="2006-10" db="EMBL/GenBank/DDBJ databases">
        <authorList>
            <person name="Fleischmann R.D."/>
            <person name="Dodson R.J."/>
            <person name="Haft D.H."/>
            <person name="Merkel J.S."/>
            <person name="Nelson W.C."/>
            <person name="Fraser C.M."/>
        </authorList>
    </citation>
    <scope>NUCLEOTIDE SEQUENCE [LARGE SCALE GENOMIC DNA]</scope>
    <source>
        <strain>ATCC 700084 / mc(2)155</strain>
    </source>
</reference>
<reference key="2">
    <citation type="journal article" date="2007" name="Genome Biol.">
        <title>Interrupted coding sequences in Mycobacterium smegmatis: authentic mutations or sequencing errors?</title>
        <authorList>
            <person name="Deshayes C."/>
            <person name="Perrodou E."/>
            <person name="Gallien S."/>
            <person name="Euphrasie D."/>
            <person name="Schaeffer C."/>
            <person name="Van-Dorsselaer A."/>
            <person name="Poch O."/>
            <person name="Lecompte O."/>
            <person name="Reyrat J.-M."/>
        </authorList>
    </citation>
    <scope>NUCLEOTIDE SEQUENCE [LARGE SCALE GENOMIC DNA]</scope>
    <source>
        <strain>ATCC 700084 / mc(2)155</strain>
    </source>
</reference>
<reference key="3">
    <citation type="journal article" date="2009" name="Genome Res.">
        <title>Ortho-proteogenomics: multiple proteomes investigation through orthology and a new MS-based protocol.</title>
        <authorList>
            <person name="Gallien S."/>
            <person name="Perrodou E."/>
            <person name="Carapito C."/>
            <person name="Deshayes C."/>
            <person name="Reyrat J.-M."/>
            <person name="Van Dorsselaer A."/>
            <person name="Poch O."/>
            <person name="Schaeffer C."/>
            <person name="Lecompte O."/>
        </authorList>
    </citation>
    <scope>NUCLEOTIDE SEQUENCE [LARGE SCALE GENOMIC DNA]</scope>
    <source>
        <strain>ATCC 700084 / mc(2)155</strain>
    </source>
</reference>
<reference key="4">
    <citation type="journal article" date="2010" name="Mol. Biosyst.">
        <title>Expansion of the mycobacterial 'PUPylome'.</title>
        <authorList>
            <person name="Watrous J."/>
            <person name="Burns K."/>
            <person name="Liu W.T."/>
            <person name="Patel A."/>
            <person name="Hook V."/>
            <person name="Bafna V."/>
            <person name="Barry C.E. III"/>
            <person name="Bark S."/>
            <person name="Dorrestein P.C."/>
        </authorList>
    </citation>
    <scope>PUPYLATION AT LYS-11</scope>
    <scope>IDENTIFICATION BY MASS SPECTROMETRY</scope>
</reference>